<sequence>MDSVISAASVIAAGLAVGLASIGPGVGQGTAAGQAVEGIARQPEAEGKIRGTLLLSLAFMEALTIYGLVVALALLFANPFV</sequence>
<keyword id="KW-0066">ATP synthesis</keyword>
<keyword id="KW-0138">CF(0)</keyword>
<keyword id="KW-0150">Chloroplast</keyword>
<keyword id="KW-0375">Hydrogen ion transport</keyword>
<keyword id="KW-0406">Ion transport</keyword>
<keyword id="KW-0446">Lipid-binding</keyword>
<keyword id="KW-0472">Membrane</keyword>
<keyword id="KW-0934">Plastid</keyword>
<keyword id="KW-0793">Thylakoid</keyword>
<keyword id="KW-0812">Transmembrane</keyword>
<keyword id="KW-1133">Transmembrane helix</keyword>
<keyword id="KW-0813">Transport</keyword>
<feature type="chain" id="PRO_0000362969" description="ATP synthase subunit c, chloroplastic">
    <location>
        <begin position="1"/>
        <end position="81"/>
    </location>
</feature>
<feature type="transmembrane region" description="Helical" evidence="1">
    <location>
        <begin position="4"/>
        <end position="24"/>
    </location>
</feature>
<feature type="transmembrane region" description="Helical" evidence="1">
    <location>
        <begin position="57"/>
        <end position="77"/>
    </location>
</feature>
<feature type="site" description="Reversibly protonated during proton transport" evidence="1">
    <location>
        <position position="61"/>
    </location>
</feature>
<evidence type="ECO:0000255" key="1">
    <source>
        <dbReference type="HAMAP-Rule" id="MF_01396"/>
    </source>
</evidence>
<comment type="function">
    <text evidence="1">F(1)F(0) ATP synthase produces ATP from ADP in the presence of a proton or sodium gradient. F-type ATPases consist of two structural domains, F(1) containing the extramembraneous catalytic core and F(0) containing the membrane proton channel, linked together by a central stalk and a peripheral stalk. During catalysis, ATP synthesis in the catalytic domain of F(1) is coupled via a rotary mechanism of the central stalk subunits to proton translocation.</text>
</comment>
<comment type="function">
    <text evidence="1">Key component of the F(0) channel; it plays a direct role in translocation across the membrane. A homomeric c-ring of between 10-14 subunits forms the central stalk rotor element with the F(1) delta and epsilon subunits.</text>
</comment>
<comment type="subunit">
    <text evidence="1">F-type ATPases have 2 components, F(1) - the catalytic core - and F(0) - the membrane proton channel. F(1) has five subunits: alpha(3), beta(3), gamma(1), delta(1), epsilon(1). F(0) has four main subunits: a(1), b(1), b'(1) and c(10-14). The alpha and beta chains form an alternating ring which encloses part of the gamma chain. F(1) is attached to F(0) by a central stalk formed by the gamma and epsilon chains, while a peripheral stalk is formed by the delta, b and b' chains.</text>
</comment>
<comment type="subcellular location">
    <subcellularLocation>
        <location evidence="1">Plastid</location>
        <location evidence="1">Chloroplast thylakoid membrane</location>
        <topology evidence="1">Multi-pass membrane protein</topology>
    </subcellularLocation>
</comment>
<comment type="miscellaneous">
    <text>In plastids the F-type ATPase is also known as CF(1)CF(0).</text>
</comment>
<comment type="similarity">
    <text evidence="1">Belongs to the ATPase C chain family.</text>
</comment>
<accession>Q32RK9</accession>
<protein>
    <recommendedName>
        <fullName evidence="1">ATP synthase subunit c, chloroplastic</fullName>
    </recommendedName>
    <alternativeName>
        <fullName evidence="1">ATP synthase F(0) sector subunit c</fullName>
    </alternativeName>
    <alternativeName>
        <fullName evidence="1">ATPase subunit III</fullName>
    </alternativeName>
    <alternativeName>
        <fullName evidence="1">F-type ATPase subunit c</fullName>
        <shortName evidence="1">F-ATPase subunit c</shortName>
    </alternativeName>
    <alternativeName>
        <fullName evidence="1">Lipid-binding protein</fullName>
    </alternativeName>
</protein>
<organism>
    <name type="scientific">Zygnema circumcarinatum</name>
    <name type="common">Green alga</name>
    <dbReference type="NCBI Taxonomy" id="35869"/>
    <lineage>
        <taxon>Eukaryota</taxon>
        <taxon>Viridiplantae</taxon>
        <taxon>Streptophyta</taxon>
        <taxon>Zygnematophyceae</taxon>
        <taxon>Zygnematophycidae</taxon>
        <taxon>Zygnematales</taxon>
        <taxon>Zygnemataceae</taxon>
        <taxon>Zygnema</taxon>
    </lineage>
</organism>
<name>ATPH_ZYGCR</name>
<dbReference type="EMBL" id="AY958086">
    <property type="protein sequence ID" value="AAX45799.1"/>
    <property type="molecule type" value="Genomic_DNA"/>
</dbReference>
<dbReference type="RefSeq" id="YP_636517.1">
    <property type="nucleotide sequence ID" value="NC_008117.1"/>
</dbReference>
<dbReference type="SMR" id="Q32RK9"/>
<dbReference type="GeneID" id="4108259"/>
<dbReference type="GO" id="GO:0009535">
    <property type="term" value="C:chloroplast thylakoid membrane"/>
    <property type="evidence" value="ECO:0007669"/>
    <property type="project" value="UniProtKB-SubCell"/>
</dbReference>
<dbReference type="GO" id="GO:0045259">
    <property type="term" value="C:proton-transporting ATP synthase complex"/>
    <property type="evidence" value="ECO:0007669"/>
    <property type="project" value="UniProtKB-KW"/>
</dbReference>
<dbReference type="GO" id="GO:0033177">
    <property type="term" value="C:proton-transporting two-sector ATPase complex, proton-transporting domain"/>
    <property type="evidence" value="ECO:0007669"/>
    <property type="project" value="InterPro"/>
</dbReference>
<dbReference type="GO" id="GO:0008289">
    <property type="term" value="F:lipid binding"/>
    <property type="evidence" value="ECO:0007669"/>
    <property type="project" value="UniProtKB-KW"/>
</dbReference>
<dbReference type="GO" id="GO:0046933">
    <property type="term" value="F:proton-transporting ATP synthase activity, rotational mechanism"/>
    <property type="evidence" value="ECO:0007669"/>
    <property type="project" value="UniProtKB-UniRule"/>
</dbReference>
<dbReference type="CDD" id="cd18183">
    <property type="entry name" value="ATP-synt_Fo_c_ATPH"/>
    <property type="match status" value="1"/>
</dbReference>
<dbReference type="FunFam" id="1.20.20.10:FF:000001">
    <property type="entry name" value="ATP synthase subunit c, chloroplastic"/>
    <property type="match status" value="1"/>
</dbReference>
<dbReference type="Gene3D" id="1.20.20.10">
    <property type="entry name" value="F1F0 ATP synthase subunit C"/>
    <property type="match status" value="1"/>
</dbReference>
<dbReference type="HAMAP" id="MF_01396">
    <property type="entry name" value="ATP_synth_c_bact"/>
    <property type="match status" value="1"/>
</dbReference>
<dbReference type="InterPro" id="IPR005953">
    <property type="entry name" value="ATP_synth_csu_bac/chlpt"/>
</dbReference>
<dbReference type="InterPro" id="IPR000454">
    <property type="entry name" value="ATP_synth_F0_csu"/>
</dbReference>
<dbReference type="InterPro" id="IPR020537">
    <property type="entry name" value="ATP_synth_F0_csu_DDCD_BS"/>
</dbReference>
<dbReference type="InterPro" id="IPR038662">
    <property type="entry name" value="ATP_synth_F0_csu_sf"/>
</dbReference>
<dbReference type="InterPro" id="IPR002379">
    <property type="entry name" value="ATPase_proteolipid_c-like_dom"/>
</dbReference>
<dbReference type="InterPro" id="IPR035921">
    <property type="entry name" value="F/V-ATP_Csub_sf"/>
</dbReference>
<dbReference type="NCBIfam" id="TIGR01260">
    <property type="entry name" value="ATP_synt_c"/>
    <property type="match status" value="1"/>
</dbReference>
<dbReference type="NCBIfam" id="NF005608">
    <property type="entry name" value="PRK07354.1"/>
    <property type="match status" value="1"/>
</dbReference>
<dbReference type="PANTHER" id="PTHR10031">
    <property type="entry name" value="ATP SYNTHASE LIPID-BINDING PROTEIN, MITOCHONDRIAL"/>
    <property type="match status" value="1"/>
</dbReference>
<dbReference type="PANTHER" id="PTHR10031:SF0">
    <property type="entry name" value="ATPASE PROTEIN 9"/>
    <property type="match status" value="1"/>
</dbReference>
<dbReference type="Pfam" id="PF00137">
    <property type="entry name" value="ATP-synt_C"/>
    <property type="match status" value="1"/>
</dbReference>
<dbReference type="PRINTS" id="PR00124">
    <property type="entry name" value="ATPASEC"/>
</dbReference>
<dbReference type="SUPFAM" id="SSF81333">
    <property type="entry name" value="F1F0 ATP synthase subunit C"/>
    <property type="match status" value="1"/>
</dbReference>
<dbReference type="PROSITE" id="PS00605">
    <property type="entry name" value="ATPASE_C"/>
    <property type="match status" value="1"/>
</dbReference>
<proteinExistence type="inferred from homology"/>
<reference key="1">
    <citation type="journal article" date="2005" name="BMC Biol.">
        <title>The complete chloroplast DNA sequences of the charophycean green algae Staurastrum and Zygnema reveal that the chloroplast genome underwent extensive changes during the evolution of the Zygnematales.</title>
        <authorList>
            <person name="Turmel M."/>
            <person name="Otis C."/>
            <person name="Lemieux C."/>
        </authorList>
    </citation>
    <scope>NUCLEOTIDE SEQUENCE [LARGE SCALE GENOMIC DNA]</scope>
</reference>
<geneLocation type="chloroplast"/>
<gene>
    <name evidence="1" type="primary">atpH</name>
</gene>